<reference key="1">
    <citation type="journal article" date="2002" name="Proc. Natl. Acad. Sci. U.S.A.">
        <title>The complete genome of hyperthermophile Methanopyrus kandleri AV19 and monophyly of archaeal methanogens.</title>
        <authorList>
            <person name="Slesarev A.I."/>
            <person name="Mezhevaya K.V."/>
            <person name="Makarova K.S."/>
            <person name="Polushin N.N."/>
            <person name="Shcherbinina O.V."/>
            <person name="Shakhova V.V."/>
            <person name="Belova G.I."/>
            <person name="Aravind L."/>
            <person name="Natale D.A."/>
            <person name="Rogozin I.B."/>
            <person name="Tatusov R.L."/>
            <person name="Wolf Y.I."/>
            <person name="Stetter K.O."/>
            <person name="Malykh A.G."/>
            <person name="Koonin E.V."/>
            <person name="Kozyavkin S.A."/>
        </authorList>
    </citation>
    <scope>NUCLEOTIDE SEQUENCE [LARGE SCALE GENOMIC DNA]</scope>
    <source>
        <strain>AV19 / DSM 6324 / JCM 9639 / NBRC 100938</strain>
    </source>
</reference>
<protein>
    <recommendedName>
        <fullName evidence="1">Putative nickel insertion protein</fullName>
    </recommendedName>
</protein>
<dbReference type="EMBL" id="AE009439">
    <property type="protein sequence ID" value="AAM02318.1"/>
    <property type="molecule type" value="Genomic_DNA"/>
</dbReference>
<dbReference type="RefSeq" id="WP_011019473.1">
    <property type="nucleotide sequence ID" value="NC_003551.1"/>
</dbReference>
<dbReference type="SMR" id="Q8TWD0"/>
<dbReference type="STRING" id="190192.MK1105"/>
<dbReference type="PaxDb" id="190192-MK1105"/>
<dbReference type="EnsemblBacteria" id="AAM02318">
    <property type="protein sequence ID" value="AAM02318"/>
    <property type="gene ID" value="MK1105"/>
</dbReference>
<dbReference type="GeneID" id="1477206"/>
<dbReference type="KEGG" id="mka:MK1105"/>
<dbReference type="PATRIC" id="fig|190192.8.peg.1160"/>
<dbReference type="HOGENOM" id="CLU_028523_2_1_2"/>
<dbReference type="InParanoid" id="Q8TWD0"/>
<dbReference type="OrthoDB" id="10691at2157"/>
<dbReference type="Proteomes" id="UP000001826">
    <property type="component" value="Chromosome"/>
</dbReference>
<dbReference type="GO" id="GO:0016829">
    <property type="term" value="F:lyase activity"/>
    <property type="evidence" value="ECO:0007669"/>
    <property type="project" value="UniProtKB-UniRule"/>
</dbReference>
<dbReference type="GO" id="GO:0016151">
    <property type="term" value="F:nickel cation binding"/>
    <property type="evidence" value="ECO:0007669"/>
    <property type="project" value="UniProtKB-UniRule"/>
</dbReference>
<dbReference type="Gene3D" id="3.30.70.1380">
    <property type="entry name" value="Transcriptional regulatory protein pf0864 domain like"/>
    <property type="match status" value="1"/>
</dbReference>
<dbReference type="HAMAP" id="MF_01074">
    <property type="entry name" value="LarC"/>
    <property type="match status" value="1"/>
</dbReference>
<dbReference type="InterPro" id="IPR002822">
    <property type="entry name" value="Ni_insertion"/>
</dbReference>
<dbReference type="NCBIfam" id="TIGR00299">
    <property type="entry name" value="nickel pincer cofactor biosynthesis protein LarC"/>
    <property type="match status" value="1"/>
</dbReference>
<dbReference type="PANTHER" id="PTHR36566">
    <property type="entry name" value="NICKEL INSERTION PROTEIN-RELATED"/>
    <property type="match status" value="1"/>
</dbReference>
<dbReference type="PANTHER" id="PTHR36566:SF1">
    <property type="entry name" value="PYRIDINIUM-3,5-BISTHIOCARBOXYLIC ACID MONONUCLEOTIDE NICKEL INSERTION PROTEIN"/>
    <property type="match status" value="1"/>
</dbReference>
<dbReference type="Pfam" id="PF01969">
    <property type="entry name" value="Ni_insertion"/>
    <property type="match status" value="1"/>
</dbReference>
<name>Y1105_METKA</name>
<accession>Q8TWD0</accession>
<keyword id="KW-0533">Nickel</keyword>
<keyword id="KW-1185">Reference proteome</keyword>
<sequence length="395" mass="43478">MILTLDPQVAGASGDMVLGALIAVGADPNRLEEVVHEVSSLGHEVDVHVHEIQKRGIRAVRVEVDAEGDLRDPDELREAVKTVAENVLEDRWRELPELALKYLLRAEERVHGDLCHLHELGSSDTVVDLVGTAALLEDLNPKASEVLPPNVGSGTVETEHGRLPVPAPAVVEVLSEWDVGIVREGEGELLTPTGAALLRTIDELLPDPPPPYRVKRQGFGAGTKDLPDRPNVLRALICEPGGSGEHVRIVETSVDDVDGEAVGELIEAVLQLEGVHDVEVLHGFGKKGRPRFVIRVVTEDRPGIEREVFRELFRWTGTLGARVYRCTRVTADRRIVDVDGIRVKVSRFEDVHHAKPEWEDVRRKVDRESAPLTRARLVGDLRKRYEGDGEDGAGD</sequence>
<feature type="chain" id="PRO_0000146861" description="Putative nickel insertion protein">
    <location>
        <begin position="1"/>
        <end position="395"/>
    </location>
</feature>
<comment type="similarity">
    <text evidence="1">Belongs to the LarC family.</text>
</comment>
<proteinExistence type="inferred from homology"/>
<gene>
    <name type="ordered locus">MK1105</name>
</gene>
<organism>
    <name type="scientific">Methanopyrus kandleri (strain AV19 / DSM 6324 / JCM 9639 / NBRC 100938)</name>
    <dbReference type="NCBI Taxonomy" id="190192"/>
    <lineage>
        <taxon>Archaea</taxon>
        <taxon>Methanobacteriati</taxon>
        <taxon>Methanobacteriota</taxon>
        <taxon>Methanomada group</taxon>
        <taxon>Methanopyri</taxon>
        <taxon>Methanopyrales</taxon>
        <taxon>Methanopyraceae</taxon>
        <taxon>Methanopyrus</taxon>
    </lineage>
</organism>
<evidence type="ECO:0000255" key="1">
    <source>
        <dbReference type="HAMAP-Rule" id="MF_01074"/>
    </source>
</evidence>